<protein>
    <recommendedName>
        <fullName>Threonine-rich protein</fullName>
    </recommendedName>
    <alternativeName>
        <fullName>Uncharacterized shell protein 15</fullName>
        <shortName>LUSP-15</shortName>
    </alternativeName>
</protein>
<name>TRP_LOTGI</name>
<accession>B3A0R4</accession>
<comment type="subcellular location">
    <subcellularLocation>
        <location evidence="3">Secreted</location>
    </subcellularLocation>
</comment>
<comment type="tissue specificity">
    <text evidence="3">Component of the acid-insoluble and acid-soluble organic matrix of calcified layers of the shell (at protein level).</text>
</comment>
<proteinExistence type="evidence at protein level"/>
<dbReference type="EMBL" id="FC633389">
    <property type="status" value="NOT_ANNOTATED_CDS"/>
    <property type="molecule type" value="mRNA"/>
</dbReference>
<dbReference type="EMBL" id="FC771588">
    <property type="status" value="NOT_ANNOTATED_CDS"/>
    <property type="molecule type" value="mRNA"/>
</dbReference>
<dbReference type="EMBL" id="FC775354">
    <property type="status" value="NOT_ANNOTATED_CDS"/>
    <property type="molecule type" value="mRNA"/>
</dbReference>
<dbReference type="RefSeq" id="XP_009063264.1">
    <property type="nucleotide sequence ID" value="XM_009065016.1"/>
</dbReference>
<dbReference type="SMR" id="B3A0R4"/>
<dbReference type="EnsemblMetazoa" id="LotgiT235609">
    <property type="protein sequence ID" value="LotgiP235609"/>
    <property type="gene ID" value="LotgiG235609"/>
</dbReference>
<dbReference type="GeneID" id="20249901"/>
<dbReference type="KEGG" id="lgi:LOTGIDRAFT_235609"/>
<dbReference type="CTD" id="20249901"/>
<dbReference type="HOGENOM" id="CLU_795215_0_0_1"/>
<dbReference type="GO" id="GO:0005576">
    <property type="term" value="C:extracellular region"/>
    <property type="evidence" value="ECO:0007669"/>
    <property type="project" value="UniProtKB-SubCell"/>
</dbReference>
<evidence type="ECO:0000255" key="1"/>
<evidence type="ECO:0000256" key="2">
    <source>
        <dbReference type="SAM" id="MobiDB-lite"/>
    </source>
</evidence>
<evidence type="ECO:0000269" key="3">
    <source>
    </source>
</evidence>
<evidence type="ECO:0000269" key="4">
    <source ref="1"/>
</evidence>
<evidence type="ECO:0000305" key="5"/>
<reference evidence="5" key="1">
    <citation type="submission" date="2007-12" db="EMBL/GenBank/DDBJ databases">
        <title>DOE Joint Genome Institute Lottia gigantea EST project.</title>
        <authorList>
            <person name="Richardson P."/>
            <person name="Lucas S."/>
            <person name="Rokhsar D."/>
            <person name="Wang M."/>
            <person name="Lindquist E.A."/>
        </authorList>
    </citation>
    <scope>NUCLEOTIDE SEQUENCE [LARGE SCALE MRNA]</scope>
    <scope>IDENTIFICATION</scope>
    <source>
        <tissue evidence="4">Larva</tissue>
        <tissue evidence="4">Mantle</tissue>
    </source>
</reference>
<reference key="2">
    <citation type="journal article" date="2013" name="FEBS J.">
        <title>The shell-forming proteome of Lottia gigantea reveals both deep conservations and lineage-specific novelties.</title>
        <authorList>
            <person name="Marie B."/>
            <person name="Jackson D.J."/>
            <person name="Ramos-Silva P."/>
            <person name="Zanella-Cleon I."/>
            <person name="Guichard N."/>
            <person name="Marin F."/>
        </authorList>
    </citation>
    <scope>PROTEIN SEQUENCE OF 49-56 AND 84-100</scope>
    <scope>SUBCELLULAR LOCATION</scope>
    <scope>TISSUE SPECIFICITY</scope>
    <source>
        <tissue>Shell</tissue>
    </source>
</reference>
<sequence length="349" mass="39064">MKGLTLACIAATVVAASHAMTTIIAPIAEISTTSSPSTTTINPLLQSRIDFEISRLTRRLERRIRGLQVGSGRLDRSITSLQRELDFNNAVLAQLPELIKNIMINNPTQRLSSRTVASIMRSVQNAATKASNEESAEVEDRRRRAIFEVTSSIVIVEGTTDSTTTTQIPEVTTQEVDTTTEMVTTAAPEQEVTSTATETTTEMTTQGTTLPSFLVSRINSVVSRIGRFFQRRIQRIQRSLSRLSRFRPLYSRLIDENTSALNNLPLLVRGLVTSPFQRRLRLSQVFRALRFRLTITTPSQPDVSPMSVRKRRQAESAEEDDDLVGDMEDLKELEQEIQEALEEVEKLDV</sequence>
<keyword id="KW-0175">Coiled coil</keyword>
<keyword id="KW-0903">Direct protein sequencing</keyword>
<keyword id="KW-0325">Glycoprotein</keyword>
<keyword id="KW-0964">Secreted</keyword>
<keyword id="KW-0732">Signal</keyword>
<organism>
    <name type="scientific">Lottia gigantea</name>
    <name type="common">Giant owl limpet</name>
    <dbReference type="NCBI Taxonomy" id="225164"/>
    <lineage>
        <taxon>Eukaryota</taxon>
        <taxon>Metazoa</taxon>
        <taxon>Spiralia</taxon>
        <taxon>Lophotrochozoa</taxon>
        <taxon>Mollusca</taxon>
        <taxon>Gastropoda</taxon>
        <taxon>Patellogastropoda</taxon>
        <taxon>Lottioidea</taxon>
        <taxon>Lottiidae</taxon>
        <taxon>Lottia</taxon>
    </lineage>
</organism>
<feature type="signal peptide" evidence="1">
    <location>
        <begin position="1"/>
        <end position="19"/>
    </location>
</feature>
<feature type="chain" id="PRO_0000415252" description="Threonine-rich protein" evidence="1">
    <location>
        <begin position="20"/>
        <end position="349"/>
    </location>
</feature>
<feature type="region of interest" description="Disordered" evidence="2">
    <location>
        <begin position="300"/>
        <end position="326"/>
    </location>
</feature>
<feature type="coiled-coil region" evidence="1">
    <location>
        <begin position="316"/>
        <end position="349"/>
    </location>
</feature>
<feature type="compositionally biased region" description="Acidic residues" evidence="2">
    <location>
        <begin position="316"/>
        <end position="326"/>
    </location>
</feature>
<feature type="glycosylation site" description="N-linked (GlcNAc...) asparagine" evidence="1">
    <location>
        <position position="257"/>
    </location>
</feature>
<feature type="sequence conflict" description="In Ref. 1; FC771588." evidence="5" ref="1">
    <original>I</original>
    <variation>L</variation>
    <location>
        <position position="119"/>
    </location>
</feature>